<organism>
    <name type="scientific">Paracoccus denitrificans (strain Pd 1222)</name>
    <dbReference type="NCBI Taxonomy" id="318586"/>
    <lineage>
        <taxon>Bacteria</taxon>
        <taxon>Pseudomonadati</taxon>
        <taxon>Pseudomonadota</taxon>
        <taxon>Alphaproteobacteria</taxon>
        <taxon>Rhodobacterales</taxon>
        <taxon>Paracoccaceae</taxon>
        <taxon>Paracoccus</taxon>
    </lineage>
</organism>
<gene>
    <name evidence="1" type="primary">rpsD</name>
    <name type="ordered locus">Pden_4303</name>
</gene>
<name>RS4_PARDP</name>
<proteinExistence type="inferred from homology"/>
<protein>
    <recommendedName>
        <fullName evidence="1">Small ribosomal subunit protein uS4</fullName>
    </recommendedName>
    <alternativeName>
        <fullName evidence="3">30S ribosomal protein S4</fullName>
    </alternativeName>
</protein>
<reference key="1">
    <citation type="submission" date="2006-12" db="EMBL/GenBank/DDBJ databases">
        <title>Complete sequence of chromosome 2 of Paracoccus denitrificans PD1222.</title>
        <authorList>
            <person name="Copeland A."/>
            <person name="Lucas S."/>
            <person name="Lapidus A."/>
            <person name="Barry K."/>
            <person name="Detter J.C."/>
            <person name="Glavina del Rio T."/>
            <person name="Hammon N."/>
            <person name="Israni S."/>
            <person name="Dalin E."/>
            <person name="Tice H."/>
            <person name="Pitluck S."/>
            <person name="Munk A.C."/>
            <person name="Brettin T."/>
            <person name="Bruce D."/>
            <person name="Han C."/>
            <person name="Tapia R."/>
            <person name="Gilna P."/>
            <person name="Schmutz J."/>
            <person name="Larimer F."/>
            <person name="Land M."/>
            <person name="Hauser L."/>
            <person name="Kyrpides N."/>
            <person name="Lykidis A."/>
            <person name="Spiro S."/>
            <person name="Richardson D.J."/>
            <person name="Moir J.W.B."/>
            <person name="Ferguson S.J."/>
            <person name="van Spanning R.J.M."/>
            <person name="Richardson P."/>
        </authorList>
    </citation>
    <scope>NUCLEOTIDE SEQUENCE [LARGE SCALE GENOMIC DNA]</scope>
    <source>
        <strain>Pd 1222</strain>
    </source>
</reference>
<accession>A1BA23</accession>
<evidence type="ECO:0000255" key="1">
    <source>
        <dbReference type="HAMAP-Rule" id="MF_01306"/>
    </source>
</evidence>
<evidence type="ECO:0000256" key="2">
    <source>
        <dbReference type="SAM" id="MobiDB-lite"/>
    </source>
</evidence>
<evidence type="ECO:0000305" key="3"/>
<sequence length="206" mass="23612">MTKRTAAKYKIDRRMGENIWGRAKSPLNRREYGPGQHGQRRKGKLSDFGTQLRAKQKLKGYYGDLTEKQFRRIYAEAERVKGDTGENLIGLLERRLDAVIYRAKFVPTIFAARQFVNHGHVEVNGKRVNIASYRVKEGDVVSIRERSRQLAIVLESVGLAERDVPDYLEVDHNKMTATFVRTPALGDVPYAVQMEPNLVVEFYAKN</sequence>
<dbReference type="EMBL" id="CP000490">
    <property type="protein sequence ID" value="ABL72367.1"/>
    <property type="molecule type" value="Genomic_DNA"/>
</dbReference>
<dbReference type="RefSeq" id="WP_011750529.1">
    <property type="nucleotide sequence ID" value="NC_008687.1"/>
</dbReference>
<dbReference type="SMR" id="A1BA23"/>
<dbReference type="STRING" id="318586.Pden_4303"/>
<dbReference type="EnsemblBacteria" id="ABL72367">
    <property type="protein sequence ID" value="ABL72367"/>
    <property type="gene ID" value="Pden_4303"/>
</dbReference>
<dbReference type="GeneID" id="93453969"/>
<dbReference type="KEGG" id="pde:Pden_4303"/>
<dbReference type="eggNOG" id="COG0522">
    <property type="taxonomic scope" value="Bacteria"/>
</dbReference>
<dbReference type="HOGENOM" id="CLU_092403_0_0_5"/>
<dbReference type="OrthoDB" id="9803672at2"/>
<dbReference type="Proteomes" id="UP000000361">
    <property type="component" value="Chromosome 2"/>
</dbReference>
<dbReference type="GO" id="GO:0015935">
    <property type="term" value="C:small ribosomal subunit"/>
    <property type="evidence" value="ECO:0007669"/>
    <property type="project" value="InterPro"/>
</dbReference>
<dbReference type="GO" id="GO:0019843">
    <property type="term" value="F:rRNA binding"/>
    <property type="evidence" value="ECO:0007669"/>
    <property type="project" value="UniProtKB-UniRule"/>
</dbReference>
<dbReference type="GO" id="GO:0003735">
    <property type="term" value="F:structural constituent of ribosome"/>
    <property type="evidence" value="ECO:0007669"/>
    <property type="project" value="InterPro"/>
</dbReference>
<dbReference type="GO" id="GO:0042274">
    <property type="term" value="P:ribosomal small subunit biogenesis"/>
    <property type="evidence" value="ECO:0007669"/>
    <property type="project" value="TreeGrafter"/>
</dbReference>
<dbReference type="GO" id="GO:0006412">
    <property type="term" value="P:translation"/>
    <property type="evidence" value="ECO:0007669"/>
    <property type="project" value="UniProtKB-UniRule"/>
</dbReference>
<dbReference type="CDD" id="cd00165">
    <property type="entry name" value="S4"/>
    <property type="match status" value="1"/>
</dbReference>
<dbReference type="FunFam" id="3.10.290.10:FF:000001">
    <property type="entry name" value="30S ribosomal protein S4"/>
    <property type="match status" value="1"/>
</dbReference>
<dbReference type="Gene3D" id="1.10.1050.10">
    <property type="entry name" value="Ribosomal Protein S4 Delta 41, Chain A, domain 1"/>
    <property type="match status" value="1"/>
</dbReference>
<dbReference type="Gene3D" id="3.10.290.10">
    <property type="entry name" value="RNA-binding S4 domain"/>
    <property type="match status" value="1"/>
</dbReference>
<dbReference type="HAMAP" id="MF_01306_B">
    <property type="entry name" value="Ribosomal_uS4_B"/>
    <property type="match status" value="1"/>
</dbReference>
<dbReference type="InterPro" id="IPR022801">
    <property type="entry name" value="Ribosomal_uS4"/>
</dbReference>
<dbReference type="InterPro" id="IPR005709">
    <property type="entry name" value="Ribosomal_uS4_bac-type"/>
</dbReference>
<dbReference type="InterPro" id="IPR018079">
    <property type="entry name" value="Ribosomal_uS4_CS"/>
</dbReference>
<dbReference type="InterPro" id="IPR001912">
    <property type="entry name" value="Ribosomal_uS4_N"/>
</dbReference>
<dbReference type="InterPro" id="IPR002942">
    <property type="entry name" value="S4_RNA-bd"/>
</dbReference>
<dbReference type="InterPro" id="IPR036986">
    <property type="entry name" value="S4_RNA-bd_sf"/>
</dbReference>
<dbReference type="NCBIfam" id="NF003717">
    <property type="entry name" value="PRK05327.1"/>
    <property type="match status" value="1"/>
</dbReference>
<dbReference type="NCBIfam" id="TIGR01017">
    <property type="entry name" value="rpsD_bact"/>
    <property type="match status" value="1"/>
</dbReference>
<dbReference type="PANTHER" id="PTHR11831">
    <property type="entry name" value="30S 40S RIBOSOMAL PROTEIN"/>
    <property type="match status" value="1"/>
</dbReference>
<dbReference type="PANTHER" id="PTHR11831:SF4">
    <property type="entry name" value="SMALL RIBOSOMAL SUBUNIT PROTEIN US4M"/>
    <property type="match status" value="1"/>
</dbReference>
<dbReference type="Pfam" id="PF00163">
    <property type="entry name" value="Ribosomal_S4"/>
    <property type="match status" value="1"/>
</dbReference>
<dbReference type="Pfam" id="PF01479">
    <property type="entry name" value="S4"/>
    <property type="match status" value="1"/>
</dbReference>
<dbReference type="SMART" id="SM01390">
    <property type="entry name" value="Ribosomal_S4"/>
    <property type="match status" value="1"/>
</dbReference>
<dbReference type="SMART" id="SM00363">
    <property type="entry name" value="S4"/>
    <property type="match status" value="1"/>
</dbReference>
<dbReference type="SUPFAM" id="SSF55174">
    <property type="entry name" value="Alpha-L RNA-binding motif"/>
    <property type="match status" value="1"/>
</dbReference>
<dbReference type="PROSITE" id="PS00632">
    <property type="entry name" value="RIBOSOMAL_S4"/>
    <property type="match status" value="1"/>
</dbReference>
<dbReference type="PROSITE" id="PS50889">
    <property type="entry name" value="S4"/>
    <property type="match status" value="1"/>
</dbReference>
<comment type="function">
    <text evidence="1">One of the primary rRNA binding proteins, it binds directly to 16S rRNA where it nucleates assembly of the body of the 30S subunit.</text>
</comment>
<comment type="function">
    <text evidence="1">With S5 and S12 plays an important role in translational accuracy.</text>
</comment>
<comment type="subunit">
    <text evidence="1">Part of the 30S ribosomal subunit. Contacts protein S5. The interaction surface between S4 and S5 is involved in control of translational fidelity.</text>
</comment>
<comment type="similarity">
    <text evidence="1">Belongs to the universal ribosomal protein uS4 family.</text>
</comment>
<keyword id="KW-1185">Reference proteome</keyword>
<keyword id="KW-0687">Ribonucleoprotein</keyword>
<keyword id="KW-0689">Ribosomal protein</keyword>
<keyword id="KW-0694">RNA-binding</keyword>
<keyword id="KW-0699">rRNA-binding</keyword>
<feature type="chain" id="PRO_0000293330" description="Small ribosomal subunit protein uS4">
    <location>
        <begin position="1"/>
        <end position="206"/>
    </location>
</feature>
<feature type="domain" description="S4 RNA-binding" evidence="1">
    <location>
        <begin position="94"/>
        <end position="157"/>
    </location>
</feature>
<feature type="region of interest" description="Disordered" evidence="2">
    <location>
        <begin position="23"/>
        <end position="47"/>
    </location>
</feature>